<comment type="function">
    <text evidence="1">mRNA decapping enzyme that specifically removes the nicotinamide adenine dinucleotide (NAD) cap from a subset of mRNAs by hydrolyzing the diphosphate linkage to produce nicotinamide mononucleotide (NMN) and 5' monophosphate mRNA. The NAD-cap is present at the 5'-end of some mRNAs and stabilizes RNA against 5'-processing. Has preference for mRNAs with a 5'-end purine. Catalyzes the hydrolysis of a broad range of dinucleotide pyrophosphates.</text>
</comment>
<comment type="catalytic activity">
    <reaction evidence="1">
        <text>a 5'-end NAD(+)-phospho-ribonucleoside in mRNA + H2O = a 5'-end phospho-adenosine-phospho-ribonucleoside in mRNA + beta-nicotinamide D-ribonucleotide + 2 H(+)</text>
        <dbReference type="Rhea" id="RHEA:60876"/>
        <dbReference type="Rhea" id="RHEA-COMP:15698"/>
        <dbReference type="Rhea" id="RHEA-COMP:15719"/>
        <dbReference type="ChEBI" id="CHEBI:14649"/>
        <dbReference type="ChEBI" id="CHEBI:15377"/>
        <dbReference type="ChEBI" id="CHEBI:15378"/>
        <dbReference type="ChEBI" id="CHEBI:144029"/>
        <dbReference type="ChEBI" id="CHEBI:144051"/>
    </reaction>
    <physiologicalReaction direction="left-to-right" evidence="1">
        <dbReference type="Rhea" id="RHEA:60877"/>
    </physiologicalReaction>
</comment>
<comment type="catalytic activity">
    <reaction evidence="1">
        <text>NAD(+) + H2O = beta-nicotinamide D-ribonucleotide + AMP + 2 H(+)</text>
        <dbReference type="Rhea" id="RHEA:11800"/>
        <dbReference type="ChEBI" id="CHEBI:14649"/>
        <dbReference type="ChEBI" id="CHEBI:15377"/>
        <dbReference type="ChEBI" id="CHEBI:15378"/>
        <dbReference type="ChEBI" id="CHEBI:57540"/>
        <dbReference type="ChEBI" id="CHEBI:456215"/>
        <dbReference type="EC" id="3.6.1.22"/>
    </reaction>
</comment>
<comment type="catalytic activity">
    <reaction evidence="1">
        <text>NADH + H2O = reduced beta-nicotinamide D-ribonucleotide + AMP + 2 H(+)</text>
        <dbReference type="Rhea" id="RHEA:48868"/>
        <dbReference type="ChEBI" id="CHEBI:15377"/>
        <dbReference type="ChEBI" id="CHEBI:15378"/>
        <dbReference type="ChEBI" id="CHEBI:57945"/>
        <dbReference type="ChEBI" id="CHEBI:90832"/>
        <dbReference type="ChEBI" id="CHEBI:456215"/>
        <dbReference type="EC" id="3.6.1.22"/>
    </reaction>
</comment>
<comment type="cofactor">
    <cofactor evidence="1">
        <name>Mg(2+)</name>
        <dbReference type="ChEBI" id="CHEBI:18420"/>
    </cofactor>
    <cofactor evidence="1">
        <name>Mn(2+)</name>
        <dbReference type="ChEBI" id="CHEBI:29035"/>
    </cofactor>
    <text evidence="1">Divalent metal cations. Mg(2+) or Mn(2+).</text>
</comment>
<comment type="cofactor">
    <cofactor evidence="1">
        <name>Zn(2+)</name>
        <dbReference type="ChEBI" id="CHEBI:29105"/>
    </cofactor>
    <text evidence="1">Binds 1 zinc ion per subunit.</text>
</comment>
<comment type="subunit">
    <text evidence="1">Homodimer.</text>
</comment>
<comment type="similarity">
    <text evidence="1">Belongs to the Nudix hydrolase family. NudC subfamily.</text>
</comment>
<reference key="1">
    <citation type="journal article" date="2011" name="J. Bacteriol.">
        <title>Comparative genomics of 28 Salmonella enterica isolates: evidence for CRISPR-mediated adaptive sublineage evolution.</title>
        <authorList>
            <person name="Fricke W.F."/>
            <person name="Mammel M.K."/>
            <person name="McDermott P.F."/>
            <person name="Tartera C."/>
            <person name="White D.G."/>
            <person name="Leclerc J.E."/>
            <person name="Ravel J."/>
            <person name="Cebula T.A."/>
        </authorList>
    </citation>
    <scope>NUCLEOTIDE SEQUENCE [LARGE SCALE GENOMIC DNA]</scope>
    <source>
        <strain>CVM19633</strain>
    </source>
</reference>
<proteinExistence type="inferred from homology"/>
<organism>
    <name type="scientific">Salmonella schwarzengrund (strain CVM19633)</name>
    <dbReference type="NCBI Taxonomy" id="439843"/>
    <lineage>
        <taxon>Bacteria</taxon>
        <taxon>Pseudomonadati</taxon>
        <taxon>Pseudomonadota</taxon>
        <taxon>Gammaproteobacteria</taxon>
        <taxon>Enterobacterales</taxon>
        <taxon>Enterobacteriaceae</taxon>
        <taxon>Salmonella</taxon>
    </lineage>
</organism>
<accession>B4TQK6</accession>
<sequence length="257" mass="29593">MDRIIEKLESGWWIVSHEQKLWLPYGELPHGLAANFDLVGQRALRIGEWQGEPVWLVLQHRRHDMGSVRQVIDQDAGLFQLAGRGVQLAEFYRSHKFCGYCGHPMHPSKTEWAMLCSHCRERYYPQIAPCIIVAIRREDSILLAQHVRHRNGVHTVLAGFVEVGETLEQAVAREVMEESGIKVKNLRYVTSQPWPFPQSLMTAFMAEYDSGDIVIDPKELLEANWYRYDDLPLLPPPGTVARRLIEDTVAMCRAEYD</sequence>
<name>NUDC_SALSV</name>
<dbReference type="EC" id="3.6.1.-" evidence="1"/>
<dbReference type="EC" id="3.6.1.22" evidence="1"/>
<dbReference type="EMBL" id="CP001127">
    <property type="protein sequence ID" value="ACF89850.1"/>
    <property type="molecule type" value="Genomic_DNA"/>
</dbReference>
<dbReference type="RefSeq" id="WP_000373956.1">
    <property type="nucleotide sequence ID" value="NC_011094.1"/>
</dbReference>
<dbReference type="SMR" id="B4TQK6"/>
<dbReference type="KEGG" id="sew:SeSA_A4377"/>
<dbReference type="HOGENOM" id="CLU_037162_0_1_6"/>
<dbReference type="Proteomes" id="UP000001865">
    <property type="component" value="Chromosome"/>
</dbReference>
<dbReference type="GO" id="GO:0005829">
    <property type="term" value="C:cytosol"/>
    <property type="evidence" value="ECO:0007669"/>
    <property type="project" value="TreeGrafter"/>
</dbReference>
<dbReference type="GO" id="GO:0000287">
    <property type="term" value="F:magnesium ion binding"/>
    <property type="evidence" value="ECO:0007669"/>
    <property type="project" value="UniProtKB-UniRule"/>
</dbReference>
<dbReference type="GO" id="GO:0030145">
    <property type="term" value="F:manganese ion binding"/>
    <property type="evidence" value="ECO:0007669"/>
    <property type="project" value="UniProtKB-UniRule"/>
</dbReference>
<dbReference type="GO" id="GO:0000210">
    <property type="term" value="F:NAD+ diphosphatase activity"/>
    <property type="evidence" value="ECO:0007669"/>
    <property type="project" value="UniProtKB-UniRule"/>
</dbReference>
<dbReference type="GO" id="GO:0035529">
    <property type="term" value="F:NADH pyrophosphatase activity"/>
    <property type="evidence" value="ECO:0007669"/>
    <property type="project" value="TreeGrafter"/>
</dbReference>
<dbReference type="GO" id="GO:0110153">
    <property type="term" value="F:RNA NAD-cap (NMN-forming) hydrolase activity"/>
    <property type="evidence" value="ECO:0007669"/>
    <property type="project" value="RHEA"/>
</dbReference>
<dbReference type="GO" id="GO:0008270">
    <property type="term" value="F:zinc ion binding"/>
    <property type="evidence" value="ECO:0007669"/>
    <property type="project" value="UniProtKB-UniRule"/>
</dbReference>
<dbReference type="GO" id="GO:0019677">
    <property type="term" value="P:NAD catabolic process"/>
    <property type="evidence" value="ECO:0007669"/>
    <property type="project" value="TreeGrafter"/>
</dbReference>
<dbReference type="GO" id="GO:0006734">
    <property type="term" value="P:NADH metabolic process"/>
    <property type="evidence" value="ECO:0007669"/>
    <property type="project" value="TreeGrafter"/>
</dbReference>
<dbReference type="GO" id="GO:0006742">
    <property type="term" value="P:NADP catabolic process"/>
    <property type="evidence" value="ECO:0007669"/>
    <property type="project" value="TreeGrafter"/>
</dbReference>
<dbReference type="CDD" id="cd03429">
    <property type="entry name" value="NUDIX_NADH_pyrophosphatase_Nudt13"/>
    <property type="match status" value="1"/>
</dbReference>
<dbReference type="FunFam" id="3.90.79.10:FF:000004">
    <property type="entry name" value="NADH pyrophosphatase"/>
    <property type="match status" value="1"/>
</dbReference>
<dbReference type="FunFam" id="3.90.79.20:FF:000001">
    <property type="entry name" value="NADH pyrophosphatase"/>
    <property type="match status" value="1"/>
</dbReference>
<dbReference type="Gene3D" id="3.90.79.20">
    <property type="match status" value="1"/>
</dbReference>
<dbReference type="Gene3D" id="3.90.79.10">
    <property type="entry name" value="Nucleoside Triphosphate Pyrophosphohydrolase"/>
    <property type="match status" value="1"/>
</dbReference>
<dbReference type="HAMAP" id="MF_00297">
    <property type="entry name" value="Nudix_NudC"/>
    <property type="match status" value="1"/>
</dbReference>
<dbReference type="InterPro" id="IPR050241">
    <property type="entry name" value="NAD-cap_RNA_hydrolase_NudC"/>
</dbReference>
<dbReference type="InterPro" id="IPR049734">
    <property type="entry name" value="NudC-like_C"/>
</dbReference>
<dbReference type="InterPro" id="IPR015797">
    <property type="entry name" value="NUDIX_hydrolase-like_dom_sf"/>
</dbReference>
<dbReference type="InterPro" id="IPR020084">
    <property type="entry name" value="NUDIX_hydrolase_CS"/>
</dbReference>
<dbReference type="InterPro" id="IPR000086">
    <property type="entry name" value="NUDIX_hydrolase_dom"/>
</dbReference>
<dbReference type="InterPro" id="IPR022925">
    <property type="entry name" value="RNA_Hydrolase_NudC"/>
</dbReference>
<dbReference type="InterPro" id="IPR015376">
    <property type="entry name" value="Znr_NADH_PPase"/>
</dbReference>
<dbReference type="NCBIfam" id="NF001299">
    <property type="entry name" value="PRK00241.1"/>
    <property type="match status" value="1"/>
</dbReference>
<dbReference type="PANTHER" id="PTHR42904:SF6">
    <property type="entry name" value="NAD-CAPPED RNA HYDROLASE NUDT12"/>
    <property type="match status" value="1"/>
</dbReference>
<dbReference type="PANTHER" id="PTHR42904">
    <property type="entry name" value="NUDIX HYDROLASE, NUDC SUBFAMILY"/>
    <property type="match status" value="1"/>
</dbReference>
<dbReference type="Pfam" id="PF00293">
    <property type="entry name" value="NUDIX"/>
    <property type="match status" value="1"/>
</dbReference>
<dbReference type="Pfam" id="PF09297">
    <property type="entry name" value="Zn_ribbon_NUD"/>
    <property type="match status" value="1"/>
</dbReference>
<dbReference type="SUPFAM" id="SSF55811">
    <property type="entry name" value="Nudix"/>
    <property type="match status" value="2"/>
</dbReference>
<dbReference type="PROSITE" id="PS51462">
    <property type="entry name" value="NUDIX"/>
    <property type="match status" value="1"/>
</dbReference>
<dbReference type="PROSITE" id="PS00893">
    <property type="entry name" value="NUDIX_BOX"/>
    <property type="match status" value="1"/>
</dbReference>
<evidence type="ECO:0000255" key="1">
    <source>
        <dbReference type="HAMAP-Rule" id="MF_00297"/>
    </source>
</evidence>
<feature type="chain" id="PRO_1000115253" description="NAD-capped RNA hydrolase NudC">
    <location>
        <begin position="1"/>
        <end position="257"/>
    </location>
</feature>
<feature type="domain" description="Nudix hydrolase" evidence="1">
    <location>
        <begin position="125"/>
        <end position="248"/>
    </location>
</feature>
<feature type="short sequence motif" description="Nudix box" evidence="1">
    <location>
        <begin position="159"/>
        <end position="180"/>
    </location>
</feature>
<feature type="binding site" evidence="1">
    <location>
        <position position="69"/>
    </location>
    <ligand>
        <name>substrate</name>
    </ligand>
</feature>
<feature type="binding site" evidence="1">
    <location>
        <position position="98"/>
    </location>
    <ligand>
        <name>Zn(2+)</name>
        <dbReference type="ChEBI" id="CHEBI:29105"/>
    </ligand>
</feature>
<feature type="binding site" evidence="1">
    <location>
        <position position="101"/>
    </location>
    <ligand>
        <name>Zn(2+)</name>
        <dbReference type="ChEBI" id="CHEBI:29105"/>
    </ligand>
</feature>
<feature type="binding site" evidence="1">
    <location>
        <position position="111"/>
    </location>
    <ligand>
        <name>substrate</name>
    </ligand>
</feature>
<feature type="binding site" evidence="1">
    <location>
        <position position="116"/>
    </location>
    <ligand>
        <name>Zn(2+)</name>
        <dbReference type="ChEBI" id="CHEBI:29105"/>
    </ligand>
</feature>
<feature type="binding site" evidence="1">
    <location>
        <position position="119"/>
    </location>
    <ligand>
        <name>Zn(2+)</name>
        <dbReference type="ChEBI" id="CHEBI:29105"/>
    </ligand>
</feature>
<feature type="binding site" evidence="1">
    <location>
        <position position="124"/>
    </location>
    <ligand>
        <name>substrate</name>
    </ligand>
</feature>
<feature type="binding site" evidence="1">
    <location>
        <position position="158"/>
    </location>
    <ligand>
        <name>a divalent metal cation</name>
        <dbReference type="ChEBI" id="CHEBI:60240"/>
        <label>1</label>
    </ligand>
</feature>
<feature type="binding site" evidence="1">
    <location>
        <position position="174"/>
    </location>
    <ligand>
        <name>a divalent metal cation</name>
        <dbReference type="ChEBI" id="CHEBI:60240"/>
        <label>2</label>
    </ligand>
</feature>
<feature type="binding site" evidence="1">
    <location>
        <position position="174"/>
    </location>
    <ligand>
        <name>a divalent metal cation</name>
        <dbReference type="ChEBI" id="CHEBI:60240"/>
        <label>3</label>
    </ligand>
</feature>
<feature type="binding site" evidence="1">
    <location>
        <position position="178"/>
    </location>
    <ligand>
        <name>a divalent metal cation</name>
        <dbReference type="ChEBI" id="CHEBI:60240"/>
        <label>1</label>
    </ligand>
</feature>
<feature type="binding site" evidence="1">
    <location>
        <position position="178"/>
    </location>
    <ligand>
        <name>a divalent metal cation</name>
        <dbReference type="ChEBI" id="CHEBI:60240"/>
        <label>3</label>
    </ligand>
</feature>
<feature type="binding site" evidence="1">
    <location>
        <begin position="192"/>
        <end position="199"/>
    </location>
    <ligand>
        <name>substrate</name>
    </ligand>
</feature>
<feature type="binding site" evidence="1">
    <location>
        <position position="219"/>
    </location>
    <ligand>
        <name>a divalent metal cation</name>
        <dbReference type="ChEBI" id="CHEBI:60240"/>
        <label>1</label>
    </ligand>
</feature>
<feature type="binding site" evidence="1">
    <location>
        <position position="219"/>
    </location>
    <ligand>
        <name>a divalent metal cation</name>
        <dbReference type="ChEBI" id="CHEBI:60240"/>
        <label>3</label>
    </ligand>
</feature>
<feature type="binding site" evidence="1">
    <location>
        <position position="241"/>
    </location>
    <ligand>
        <name>substrate</name>
    </ligand>
</feature>
<keyword id="KW-0378">Hydrolase</keyword>
<keyword id="KW-0460">Magnesium</keyword>
<keyword id="KW-0464">Manganese</keyword>
<keyword id="KW-0479">Metal-binding</keyword>
<keyword id="KW-0520">NAD</keyword>
<keyword id="KW-0862">Zinc</keyword>
<gene>
    <name evidence="1" type="primary">nudC</name>
    <name type="ordered locus">SeSA_A4377</name>
</gene>
<protein>
    <recommendedName>
        <fullName evidence="1">NAD-capped RNA hydrolase NudC</fullName>
        <shortName evidence="1">DeNADding enzyme NudC</shortName>
        <ecNumber evidence="1">3.6.1.-</ecNumber>
    </recommendedName>
    <alternativeName>
        <fullName evidence="1">NADH pyrophosphatase</fullName>
        <ecNumber evidence="1">3.6.1.22</ecNumber>
    </alternativeName>
</protein>